<protein>
    <recommendedName>
        <fullName evidence="1">Succinate--CoA ligase [ADP-forming] subunit beta</fullName>
        <ecNumber evidence="1">6.2.1.5</ecNumber>
    </recommendedName>
    <alternativeName>
        <fullName evidence="1">Succinyl-CoA synthetase subunit beta</fullName>
        <shortName evidence="1">SCS-beta</shortName>
    </alternativeName>
</protein>
<proteinExistence type="inferred from homology"/>
<name>SUCC_PSEAB</name>
<keyword id="KW-0067">ATP-binding</keyword>
<keyword id="KW-0436">Ligase</keyword>
<keyword id="KW-0460">Magnesium</keyword>
<keyword id="KW-0479">Metal-binding</keyword>
<keyword id="KW-0547">Nucleotide-binding</keyword>
<keyword id="KW-0816">Tricarboxylic acid cycle</keyword>
<accession>Q02K73</accession>
<reference key="1">
    <citation type="journal article" date="2006" name="Genome Biol.">
        <title>Genomic analysis reveals that Pseudomonas aeruginosa virulence is combinatorial.</title>
        <authorList>
            <person name="Lee D.G."/>
            <person name="Urbach J.M."/>
            <person name="Wu G."/>
            <person name="Liberati N.T."/>
            <person name="Feinbaum R.L."/>
            <person name="Miyata S."/>
            <person name="Diggins L.T."/>
            <person name="He J."/>
            <person name="Saucier M."/>
            <person name="Deziel E."/>
            <person name="Friedman L."/>
            <person name="Li L."/>
            <person name="Grills G."/>
            <person name="Montgomery K."/>
            <person name="Kucherlapati R."/>
            <person name="Rahme L.G."/>
            <person name="Ausubel F.M."/>
        </authorList>
    </citation>
    <scope>NUCLEOTIDE SEQUENCE [LARGE SCALE GENOMIC DNA]</scope>
    <source>
        <strain>UCBPP-PA14</strain>
    </source>
</reference>
<feature type="chain" id="PRO_1000082166" description="Succinate--CoA ligase [ADP-forming] subunit beta">
    <location>
        <begin position="1"/>
        <end position="388"/>
    </location>
</feature>
<feature type="domain" description="ATP-grasp" evidence="1">
    <location>
        <begin position="9"/>
        <end position="244"/>
    </location>
</feature>
<feature type="binding site" evidence="1">
    <location>
        <position position="46"/>
    </location>
    <ligand>
        <name>ATP</name>
        <dbReference type="ChEBI" id="CHEBI:30616"/>
    </ligand>
</feature>
<feature type="binding site" evidence="1">
    <location>
        <begin position="53"/>
        <end position="55"/>
    </location>
    <ligand>
        <name>ATP</name>
        <dbReference type="ChEBI" id="CHEBI:30616"/>
    </ligand>
</feature>
<feature type="binding site" evidence="1">
    <location>
        <position position="99"/>
    </location>
    <ligand>
        <name>ATP</name>
        <dbReference type="ChEBI" id="CHEBI:30616"/>
    </ligand>
</feature>
<feature type="binding site" evidence="1">
    <location>
        <position position="102"/>
    </location>
    <ligand>
        <name>ATP</name>
        <dbReference type="ChEBI" id="CHEBI:30616"/>
    </ligand>
</feature>
<feature type="binding site" evidence="1">
    <location>
        <position position="107"/>
    </location>
    <ligand>
        <name>ATP</name>
        <dbReference type="ChEBI" id="CHEBI:30616"/>
    </ligand>
</feature>
<feature type="binding site" evidence="1">
    <location>
        <position position="199"/>
    </location>
    <ligand>
        <name>Mg(2+)</name>
        <dbReference type="ChEBI" id="CHEBI:18420"/>
    </ligand>
</feature>
<feature type="binding site" evidence="1">
    <location>
        <position position="213"/>
    </location>
    <ligand>
        <name>Mg(2+)</name>
        <dbReference type="ChEBI" id="CHEBI:18420"/>
    </ligand>
</feature>
<feature type="binding site" evidence="1">
    <location>
        <position position="264"/>
    </location>
    <ligand>
        <name>substrate</name>
        <note>ligand shared with subunit alpha</note>
    </ligand>
</feature>
<feature type="binding site" evidence="1">
    <location>
        <begin position="321"/>
        <end position="323"/>
    </location>
    <ligand>
        <name>substrate</name>
        <note>ligand shared with subunit alpha</note>
    </ligand>
</feature>
<evidence type="ECO:0000255" key="1">
    <source>
        <dbReference type="HAMAP-Rule" id="MF_00558"/>
    </source>
</evidence>
<organism>
    <name type="scientific">Pseudomonas aeruginosa (strain UCBPP-PA14)</name>
    <dbReference type="NCBI Taxonomy" id="208963"/>
    <lineage>
        <taxon>Bacteria</taxon>
        <taxon>Pseudomonadati</taxon>
        <taxon>Pseudomonadota</taxon>
        <taxon>Gammaproteobacteria</taxon>
        <taxon>Pseudomonadales</taxon>
        <taxon>Pseudomonadaceae</taxon>
        <taxon>Pseudomonas</taxon>
    </lineage>
</organism>
<sequence>MNLHEYQGKQLFAEYGLPVSKGFAVDTPEEAAEACDKIGGSEWVVKAQVHAGGRGKAGGVKLVKSKEDAKAFAQQWLGKNLVTYQTDANGQPVSKILVESCTDIDKELYLGAVVDRSSRRIVFMASTEGGVDIEKVAHDTPEKILKVTIDPLVGAQPYQGRELAFQLGLKGDQIKQFTHIFVGLAKLFQDYDLALLEVNPLVIKKDGNLHCLDAKINIDSNALYRQPKLRAMHDPSQDDAREAHAQKWELNYVALEGNIGCMVNGAGLAMGTMDIVNLHGGKPANFLDVGGGATKERVTEAFKIILSDSNVKAVLVNIFGGIVRCDMIAEGIIGAVKEVGVKVPVVVRLEGNNAELGAKVLAESGLNIIAATSLTDAAQQVVKAAEGK</sequence>
<gene>
    <name evidence="1" type="primary">sucC</name>
    <name type="ordered locus">PA14_43950</name>
</gene>
<dbReference type="EC" id="6.2.1.5" evidence="1"/>
<dbReference type="EMBL" id="CP000438">
    <property type="protein sequence ID" value="ABJ10769.1"/>
    <property type="molecule type" value="Genomic_DNA"/>
</dbReference>
<dbReference type="RefSeq" id="WP_003140159.1">
    <property type="nucleotide sequence ID" value="NZ_CP034244.1"/>
</dbReference>
<dbReference type="SMR" id="Q02K73"/>
<dbReference type="KEGG" id="pau:PA14_43950"/>
<dbReference type="PseudoCAP" id="PA14_43950"/>
<dbReference type="HOGENOM" id="CLU_037430_0_2_6"/>
<dbReference type="BioCyc" id="PAER208963:G1G74-3686-MONOMER"/>
<dbReference type="UniPathway" id="UPA00223">
    <property type="reaction ID" value="UER00999"/>
</dbReference>
<dbReference type="Proteomes" id="UP000000653">
    <property type="component" value="Chromosome"/>
</dbReference>
<dbReference type="GO" id="GO:0005829">
    <property type="term" value="C:cytosol"/>
    <property type="evidence" value="ECO:0007669"/>
    <property type="project" value="TreeGrafter"/>
</dbReference>
<dbReference type="GO" id="GO:0042709">
    <property type="term" value="C:succinate-CoA ligase complex"/>
    <property type="evidence" value="ECO:0007669"/>
    <property type="project" value="TreeGrafter"/>
</dbReference>
<dbReference type="GO" id="GO:0005524">
    <property type="term" value="F:ATP binding"/>
    <property type="evidence" value="ECO:0007669"/>
    <property type="project" value="UniProtKB-UniRule"/>
</dbReference>
<dbReference type="GO" id="GO:0000287">
    <property type="term" value="F:magnesium ion binding"/>
    <property type="evidence" value="ECO:0007669"/>
    <property type="project" value="UniProtKB-UniRule"/>
</dbReference>
<dbReference type="GO" id="GO:0004775">
    <property type="term" value="F:succinate-CoA ligase (ADP-forming) activity"/>
    <property type="evidence" value="ECO:0007669"/>
    <property type="project" value="UniProtKB-UniRule"/>
</dbReference>
<dbReference type="GO" id="GO:0004776">
    <property type="term" value="F:succinate-CoA ligase (GDP-forming) activity"/>
    <property type="evidence" value="ECO:0007669"/>
    <property type="project" value="RHEA"/>
</dbReference>
<dbReference type="GO" id="GO:0006104">
    <property type="term" value="P:succinyl-CoA metabolic process"/>
    <property type="evidence" value="ECO:0007669"/>
    <property type="project" value="TreeGrafter"/>
</dbReference>
<dbReference type="GO" id="GO:0006099">
    <property type="term" value="P:tricarboxylic acid cycle"/>
    <property type="evidence" value="ECO:0007669"/>
    <property type="project" value="UniProtKB-UniRule"/>
</dbReference>
<dbReference type="FunFam" id="3.30.1490.20:FF:000002">
    <property type="entry name" value="Succinate--CoA ligase [ADP-forming] subunit beta"/>
    <property type="match status" value="1"/>
</dbReference>
<dbReference type="FunFam" id="3.30.470.20:FF:000002">
    <property type="entry name" value="Succinate--CoA ligase [ADP-forming] subunit beta"/>
    <property type="match status" value="1"/>
</dbReference>
<dbReference type="FunFam" id="3.40.50.261:FF:000001">
    <property type="entry name" value="Succinate--CoA ligase [ADP-forming] subunit beta"/>
    <property type="match status" value="1"/>
</dbReference>
<dbReference type="Gene3D" id="3.30.1490.20">
    <property type="entry name" value="ATP-grasp fold, A domain"/>
    <property type="match status" value="1"/>
</dbReference>
<dbReference type="Gene3D" id="3.30.470.20">
    <property type="entry name" value="ATP-grasp fold, B domain"/>
    <property type="match status" value="1"/>
</dbReference>
<dbReference type="Gene3D" id="3.40.50.261">
    <property type="entry name" value="Succinyl-CoA synthetase domains"/>
    <property type="match status" value="1"/>
</dbReference>
<dbReference type="HAMAP" id="MF_00558">
    <property type="entry name" value="Succ_CoA_beta"/>
    <property type="match status" value="1"/>
</dbReference>
<dbReference type="InterPro" id="IPR011761">
    <property type="entry name" value="ATP-grasp"/>
</dbReference>
<dbReference type="InterPro" id="IPR013650">
    <property type="entry name" value="ATP-grasp_succ-CoA_synth-type"/>
</dbReference>
<dbReference type="InterPro" id="IPR013815">
    <property type="entry name" value="ATP_grasp_subdomain_1"/>
</dbReference>
<dbReference type="InterPro" id="IPR017866">
    <property type="entry name" value="Succ-CoA_synthase_bsu_CS"/>
</dbReference>
<dbReference type="InterPro" id="IPR005811">
    <property type="entry name" value="SUCC_ACL_C"/>
</dbReference>
<dbReference type="InterPro" id="IPR005809">
    <property type="entry name" value="Succ_CoA_ligase-like_bsu"/>
</dbReference>
<dbReference type="InterPro" id="IPR016102">
    <property type="entry name" value="Succinyl-CoA_synth-like"/>
</dbReference>
<dbReference type="NCBIfam" id="NF001913">
    <property type="entry name" value="PRK00696.1"/>
    <property type="match status" value="1"/>
</dbReference>
<dbReference type="NCBIfam" id="TIGR01016">
    <property type="entry name" value="sucCoAbeta"/>
    <property type="match status" value="1"/>
</dbReference>
<dbReference type="PANTHER" id="PTHR11815:SF10">
    <property type="entry name" value="SUCCINATE--COA LIGASE [GDP-FORMING] SUBUNIT BETA, MITOCHONDRIAL"/>
    <property type="match status" value="1"/>
</dbReference>
<dbReference type="PANTHER" id="PTHR11815">
    <property type="entry name" value="SUCCINYL-COA SYNTHETASE BETA CHAIN"/>
    <property type="match status" value="1"/>
</dbReference>
<dbReference type="Pfam" id="PF08442">
    <property type="entry name" value="ATP-grasp_2"/>
    <property type="match status" value="1"/>
</dbReference>
<dbReference type="Pfam" id="PF00549">
    <property type="entry name" value="Ligase_CoA"/>
    <property type="match status" value="1"/>
</dbReference>
<dbReference type="PIRSF" id="PIRSF001554">
    <property type="entry name" value="SucCS_beta"/>
    <property type="match status" value="1"/>
</dbReference>
<dbReference type="SUPFAM" id="SSF56059">
    <property type="entry name" value="Glutathione synthetase ATP-binding domain-like"/>
    <property type="match status" value="1"/>
</dbReference>
<dbReference type="SUPFAM" id="SSF52210">
    <property type="entry name" value="Succinyl-CoA synthetase domains"/>
    <property type="match status" value="1"/>
</dbReference>
<dbReference type="PROSITE" id="PS50975">
    <property type="entry name" value="ATP_GRASP"/>
    <property type="match status" value="1"/>
</dbReference>
<dbReference type="PROSITE" id="PS01217">
    <property type="entry name" value="SUCCINYL_COA_LIG_3"/>
    <property type="match status" value="1"/>
</dbReference>
<comment type="function">
    <text evidence="1">Succinyl-CoA synthetase functions in the citric acid cycle (TCA), coupling the hydrolysis of succinyl-CoA to the synthesis of either ATP or GTP and thus represents the only step of substrate-level phosphorylation in the TCA. The beta subunit provides nucleotide specificity of the enzyme and binds the substrate succinate, while the binding sites for coenzyme A and phosphate are found in the alpha subunit.</text>
</comment>
<comment type="catalytic activity">
    <reaction evidence="1">
        <text>succinate + ATP + CoA = succinyl-CoA + ADP + phosphate</text>
        <dbReference type="Rhea" id="RHEA:17661"/>
        <dbReference type="ChEBI" id="CHEBI:30031"/>
        <dbReference type="ChEBI" id="CHEBI:30616"/>
        <dbReference type="ChEBI" id="CHEBI:43474"/>
        <dbReference type="ChEBI" id="CHEBI:57287"/>
        <dbReference type="ChEBI" id="CHEBI:57292"/>
        <dbReference type="ChEBI" id="CHEBI:456216"/>
        <dbReference type="EC" id="6.2.1.5"/>
    </reaction>
    <physiologicalReaction direction="right-to-left" evidence="1">
        <dbReference type="Rhea" id="RHEA:17663"/>
    </physiologicalReaction>
</comment>
<comment type="catalytic activity">
    <reaction evidence="1">
        <text>GTP + succinate + CoA = succinyl-CoA + GDP + phosphate</text>
        <dbReference type="Rhea" id="RHEA:22120"/>
        <dbReference type="ChEBI" id="CHEBI:30031"/>
        <dbReference type="ChEBI" id="CHEBI:37565"/>
        <dbReference type="ChEBI" id="CHEBI:43474"/>
        <dbReference type="ChEBI" id="CHEBI:57287"/>
        <dbReference type="ChEBI" id="CHEBI:57292"/>
        <dbReference type="ChEBI" id="CHEBI:58189"/>
    </reaction>
    <physiologicalReaction direction="right-to-left" evidence="1">
        <dbReference type="Rhea" id="RHEA:22122"/>
    </physiologicalReaction>
</comment>
<comment type="cofactor">
    <cofactor evidence="1">
        <name>Mg(2+)</name>
        <dbReference type="ChEBI" id="CHEBI:18420"/>
    </cofactor>
    <text evidence="1">Binds 1 Mg(2+) ion per subunit.</text>
</comment>
<comment type="pathway">
    <text evidence="1">Carbohydrate metabolism; tricarboxylic acid cycle; succinate from succinyl-CoA (ligase route): step 1/1.</text>
</comment>
<comment type="subunit">
    <text evidence="1">Heterotetramer of two alpha and two beta subunits.</text>
</comment>
<comment type="similarity">
    <text evidence="1">Belongs to the succinate/malate CoA ligase beta subunit family.</text>
</comment>